<proteinExistence type="inferred from homology"/>
<organism>
    <name type="scientific">Mycoplasma pneumoniae (strain ATCC 29342 / M129 / Subtype 1)</name>
    <name type="common">Mycoplasmoides pneumoniae</name>
    <dbReference type="NCBI Taxonomy" id="272634"/>
    <lineage>
        <taxon>Bacteria</taxon>
        <taxon>Bacillati</taxon>
        <taxon>Mycoplasmatota</taxon>
        <taxon>Mycoplasmoidales</taxon>
        <taxon>Mycoplasmoidaceae</taxon>
        <taxon>Mycoplasmoides</taxon>
    </lineage>
</organism>
<gene>
    <name type="ordered locus">MPN_443</name>
    <name type="ORF">H08_orf409</name>
    <name type="ORF">MP398</name>
</gene>
<sequence>MHFIQPLQAFLQTKHIVEFSSIQQAVFKVWPRQNVVGIAETGSGKTFAYLLPALNQIDVTLNKPQAVVFVPTKELKWQILTILNDIKASFTGLKVSENFNSNAHLIVSLIGKDIILHETIKYVVFDEVDMFLEDSSQAEWINCVQLFQKHKPHFGFFSATLFNEQLQQIRKQVAPLTVVNQKKRAWKHSLVKHFLLNLNGQEPFAGLLALLNYHHNEQVLVFCSNAKSLKQLTSLLAHNQLSFKSLHGQLTPNERKHIFTSAANNTVRVLVVSDLLARGIDLPHFSVVISWDLPLVDSFYIHRSGRVARFNSWGNSYVFDLPHNQHKLTKFAHKGILFNSVHLERDGTLKFPQLKQSKQKPAVSSELKTAIKRIKAGYKKVKPNYKKRQKQQIAELFAKRKQRRSWKNF</sequence>
<keyword id="KW-0067">ATP-binding</keyword>
<keyword id="KW-0347">Helicase</keyword>
<keyword id="KW-0378">Hydrolase</keyword>
<keyword id="KW-0547">Nucleotide-binding</keyword>
<keyword id="KW-1185">Reference proteome</keyword>
<keyword id="KW-0694">RNA-binding</keyword>
<reference key="1">
    <citation type="journal article" date="1996" name="Nucleic Acids Res.">
        <title>Complete sequence analysis of the genome of the bacterium Mycoplasma pneumoniae.</title>
        <authorList>
            <person name="Himmelreich R."/>
            <person name="Hilbert H."/>
            <person name="Plagens H."/>
            <person name="Pirkl E."/>
            <person name="Li B.-C."/>
            <person name="Herrmann R."/>
        </authorList>
    </citation>
    <scope>NUCLEOTIDE SEQUENCE [LARGE SCALE GENOMIC DNA]</scope>
    <source>
        <strain>ATCC 29342 / M129 / Subtype 1</strain>
    </source>
</reference>
<dbReference type="EC" id="3.6.4.13"/>
<dbReference type="EMBL" id="U00089">
    <property type="protein sequence ID" value="AAB96046.1"/>
    <property type="molecule type" value="Genomic_DNA"/>
</dbReference>
<dbReference type="PIR" id="S73724">
    <property type="entry name" value="S73724"/>
</dbReference>
<dbReference type="RefSeq" id="NP_110131.1">
    <property type="nucleotide sequence ID" value="NC_000912.1"/>
</dbReference>
<dbReference type="RefSeq" id="WP_010874799.1">
    <property type="nucleotide sequence ID" value="NZ_OU342337.1"/>
</dbReference>
<dbReference type="SMR" id="P75335"/>
<dbReference type="IntAct" id="P75335">
    <property type="interactions" value="1"/>
</dbReference>
<dbReference type="STRING" id="272634.MPN_443"/>
<dbReference type="EnsemblBacteria" id="AAB96046">
    <property type="protein sequence ID" value="AAB96046"/>
    <property type="gene ID" value="MPN_443"/>
</dbReference>
<dbReference type="KEGG" id="mpn:MPN_443"/>
<dbReference type="PATRIC" id="fig|272634.6.peg.479"/>
<dbReference type="HOGENOM" id="CLU_003041_1_3_14"/>
<dbReference type="OrthoDB" id="9805696at2"/>
<dbReference type="BioCyc" id="MPNE272634:G1GJ3-713-MONOMER"/>
<dbReference type="Proteomes" id="UP000000808">
    <property type="component" value="Chromosome"/>
</dbReference>
<dbReference type="GO" id="GO:0005524">
    <property type="term" value="F:ATP binding"/>
    <property type="evidence" value="ECO:0007669"/>
    <property type="project" value="UniProtKB-KW"/>
</dbReference>
<dbReference type="GO" id="GO:0016887">
    <property type="term" value="F:ATP hydrolysis activity"/>
    <property type="evidence" value="ECO:0007669"/>
    <property type="project" value="RHEA"/>
</dbReference>
<dbReference type="GO" id="GO:0003723">
    <property type="term" value="F:RNA binding"/>
    <property type="evidence" value="ECO:0007669"/>
    <property type="project" value="UniProtKB-KW"/>
</dbReference>
<dbReference type="GO" id="GO:0003724">
    <property type="term" value="F:RNA helicase activity"/>
    <property type="evidence" value="ECO:0007669"/>
    <property type="project" value="UniProtKB-EC"/>
</dbReference>
<dbReference type="CDD" id="cd18787">
    <property type="entry name" value="SF2_C_DEAD"/>
    <property type="match status" value="1"/>
</dbReference>
<dbReference type="Gene3D" id="3.40.50.300">
    <property type="entry name" value="P-loop containing nucleotide triphosphate hydrolases"/>
    <property type="match status" value="2"/>
</dbReference>
<dbReference type="InterPro" id="IPR011545">
    <property type="entry name" value="DEAD/DEAH_box_helicase_dom"/>
</dbReference>
<dbReference type="InterPro" id="IPR014001">
    <property type="entry name" value="Helicase_ATP-bd"/>
</dbReference>
<dbReference type="InterPro" id="IPR001650">
    <property type="entry name" value="Helicase_C-like"/>
</dbReference>
<dbReference type="InterPro" id="IPR027417">
    <property type="entry name" value="P-loop_NTPase"/>
</dbReference>
<dbReference type="PANTHER" id="PTHR24031">
    <property type="entry name" value="RNA HELICASE"/>
    <property type="match status" value="1"/>
</dbReference>
<dbReference type="Pfam" id="PF00270">
    <property type="entry name" value="DEAD"/>
    <property type="match status" value="1"/>
</dbReference>
<dbReference type="Pfam" id="PF00271">
    <property type="entry name" value="Helicase_C"/>
    <property type="match status" value="1"/>
</dbReference>
<dbReference type="SMART" id="SM00487">
    <property type="entry name" value="DEXDc"/>
    <property type="match status" value="1"/>
</dbReference>
<dbReference type="SMART" id="SM00490">
    <property type="entry name" value="HELICc"/>
    <property type="match status" value="1"/>
</dbReference>
<dbReference type="SUPFAM" id="SSF52540">
    <property type="entry name" value="P-loop containing nucleoside triphosphate hydrolases"/>
    <property type="match status" value="1"/>
</dbReference>
<dbReference type="PROSITE" id="PS51192">
    <property type="entry name" value="HELICASE_ATP_BIND_1"/>
    <property type="match status" value="1"/>
</dbReference>
<dbReference type="PROSITE" id="PS51194">
    <property type="entry name" value="HELICASE_CTER"/>
    <property type="match status" value="1"/>
</dbReference>
<comment type="catalytic activity">
    <reaction>
        <text>ATP + H2O = ADP + phosphate + H(+)</text>
        <dbReference type="Rhea" id="RHEA:13065"/>
        <dbReference type="ChEBI" id="CHEBI:15377"/>
        <dbReference type="ChEBI" id="CHEBI:15378"/>
        <dbReference type="ChEBI" id="CHEBI:30616"/>
        <dbReference type="ChEBI" id="CHEBI:43474"/>
        <dbReference type="ChEBI" id="CHEBI:456216"/>
        <dbReference type="EC" id="3.6.4.13"/>
    </reaction>
</comment>
<comment type="similarity">
    <text evidence="3">Belongs to the DEAD box helicase family.</text>
</comment>
<feature type="chain" id="PRO_0000055113" description="Probable ATP-dependent RNA helicase MG308 homolog">
    <location>
        <begin position="1"/>
        <end position="409"/>
    </location>
</feature>
<feature type="domain" description="Helicase ATP-binding" evidence="1">
    <location>
        <begin position="26"/>
        <end position="179"/>
    </location>
</feature>
<feature type="domain" description="Helicase C-terminal" evidence="2">
    <location>
        <begin position="190"/>
        <end position="349"/>
    </location>
</feature>
<feature type="short sequence motif" description="DEVD box">
    <location>
        <begin position="126"/>
        <end position="129"/>
    </location>
</feature>
<feature type="binding site" evidence="1">
    <location>
        <begin position="39"/>
        <end position="46"/>
    </location>
    <ligand>
        <name>ATP</name>
        <dbReference type="ChEBI" id="CHEBI:30616"/>
    </ligand>
</feature>
<protein>
    <recommendedName>
        <fullName>Probable ATP-dependent RNA helicase MG308 homolog</fullName>
        <ecNumber>3.6.4.13</ecNumber>
    </recommendedName>
</protein>
<accession>P75335</accession>
<evidence type="ECO:0000255" key="1">
    <source>
        <dbReference type="PROSITE-ProRule" id="PRU00541"/>
    </source>
</evidence>
<evidence type="ECO:0000255" key="2">
    <source>
        <dbReference type="PROSITE-ProRule" id="PRU00542"/>
    </source>
</evidence>
<evidence type="ECO:0000305" key="3"/>
<name>Y443_MYCPN</name>